<gene>
    <name type="primary">rpl23-A</name>
</gene>
<gene>
    <name type="primary">rpl23-B</name>
</gene>
<name>RK23_SOLTU</name>
<proteinExistence type="inferred from homology"/>
<accession>Q2VED8</accession>
<feature type="chain" id="PRO_0000272934" description="Large ribosomal subunit protein uL23cz/uL23cy">
    <location>
        <begin position="1"/>
        <end position="93"/>
    </location>
</feature>
<reference key="1">
    <citation type="journal article" date="2006" name="Plant Cell Rep.">
        <title>The complete chloroplast genome sequences of Solanum tuberosum and comparative analysis with Solanaceae species identified the presence of a 241-bp deletion in cultivated potato chloroplast DNA sequence.</title>
        <authorList>
            <person name="Chung H.-J."/>
            <person name="Jung J.D."/>
            <person name="Park H.-W."/>
            <person name="Kim J.-H."/>
            <person name="Cha H.W."/>
            <person name="Min S.R."/>
            <person name="Jeong W.-J."/>
            <person name="Liu J.R."/>
        </authorList>
    </citation>
    <scope>NUCLEOTIDE SEQUENCE [LARGE SCALE GENOMIC DNA]</scope>
    <source>
        <strain>cv. Desiree</strain>
    </source>
</reference>
<reference key="2">
    <citation type="submission" date="2006-02" db="EMBL/GenBank/DDBJ databases">
        <title>Complete chloroplast genome sequences of Solanum tuberosum cultivar Desiree and comparative analyses with other Solanaceae genomes.</title>
        <authorList>
            <person name="Gargano D."/>
            <person name="Scotti N."/>
            <person name="Vezzi A."/>
            <person name="Bilardi A."/>
            <person name="Valle G."/>
            <person name="Grillo S."/>
            <person name="Cardi T."/>
        </authorList>
    </citation>
    <scope>NUCLEOTIDE SEQUENCE [LARGE SCALE GENOMIC DNA]</scope>
    <source>
        <strain>cv. Desiree</strain>
    </source>
</reference>
<protein>
    <recommendedName>
        <fullName evidence="2">Large ribosomal subunit protein uL23cz/uL23cy</fullName>
    </recommendedName>
    <alternativeName>
        <fullName>50S ribosomal protein L23, chloroplastic</fullName>
    </alternativeName>
</protein>
<geneLocation type="chloroplast"/>
<evidence type="ECO:0000250" key="1"/>
<evidence type="ECO:0000305" key="2"/>
<sequence>MDGIKYAVFTDKSIRLLGKNQYTSNVESGSTRTEIKHWVELFFGVKVIAMNSHRLPGKSRRMGPIMGHTMHYRRMIITLQPGYSIPPLRKKRT</sequence>
<dbReference type="EMBL" id="DQ231562">
    <property type="protein sequence ID" value="ABB90080.1"/>
    <property type="molecule type" value="Genomic_DNA"/>
</dbReference>
<dbReference type="EMBL" id="DQ231562">
    <property type="protein sequence ID" value="ABB90100.1"/>
    <property type="molecule type" value="Genomic_DNA"/>
</dbReference>
<dbReference type="EMBL" id="DQ386163">
    <property type="protein sequence ID" value="ABD47098.1"/>
    <property type="molecule type" value="Genomic_DNA"/>
</dbReference>
<dbReference type="EMBL" id="DQ386163">
    <property type="protein sequence ID" value="ABD47120.1"/>
    <property type="molecule type" value="Genomic_DNA"/>
</dbReference>
<dbReference type="SMR" id="Q2VED8"/>
<dbReference type="FunCoup" id="Q2VED8">
    <property type="interactions" value="91"/>
</dbReference>
<dbReference type="STRING" id="4113.Q2VED8"/>
<dbReference type="KEGG" id="sot:4099886"/>
<dbReference type="KEGG" id="sot:4099927"/>
<dbReference type="InParanoid" id="Q2VED8"/>
<dbReference type="OrthoDB" id="1245557at2759"/>
<dbReference type="Proteomes" id="UP000011115">
    <property type="component" value="Unassembled WGS sequence"/>
</dbReference>
<dbReference type="GO" id="GO:0009507">
    <property type="term" value="C:chloroplast"/>
    <property type="evidence" value="ECO:0007669"/>
    <property type="project" value="UniProtKB-SubCell"/>
</dbReference>
<dbReference type="GO" id="GO:0022625">
    <property type="term" value="C:cytosolic large ribosomal subunit"/>
    <property type="evidence" value="ECO:0000318"/>
    <property type="project" value="GO_Central"/>
</dbReference>
<dbReference type="GO" id="GO:0003729">
    <property type="term" value="F:mRNA binding"/>
    <property type="evidence" value="ECO:0007669"/>
    <property type="project" value="UniProtKB-ARBA"/>
</dbReference>
<dbReference type="GO" id="GO:0019843">
    <property type="term" value="F:rRNA binding"/>
    <property type="evidence" value="ECO:0007669"/>
    <property type="project" value="UniProtKB-UniRule"/>
</dbReference>
<dbReference type="GO" id="GO:0003735">
    <property type="term" value="F:structural constituent of ribosome"/>
    <property type="evidence" value="ECO:0000318"/>
    <property type="project" value="GO_Central"/>
</dbReference>
<dbReference type="GO" id="GO:0006412">
    <property type="term" value="P:translation"/>
    <property type="evidence" value="ECO:0007669"/>
    <property type="project" value="UniProtKB-UniRule"/>
</dbReference>
<dbReference type="FunFam" id="3.30.70.330:FF:000002">
    <property type="entry name" value="50S ribosomal protein L23, chloroplastic"/>
    <property type="match status" value="1"/>
</dbReference>
<dbReference type="Gene3D" id="3.30.70.330">
    <property type="match status" value="1"/>
</dbReference>
<dbReference type="HAMAP" id="MF_01369_B">
    <property type="entry name" value="Ribosomal_uL23_B"/>
    <property type="match status" value="1"/>
</dbReference>
<dbReference type="InterPro" id="IPR012677">
    <property type="entry name" value="Nucleotide-bd_a/b_plait_sf"/>
</dbReference>
<dbReference type="InterPro" id="IPR013025">
    <property type="entry name" value="Ribosomal_uL23-like"/>
</dbReference>
<dbReference type="InterPro" id="IPR012678">
    <property type="entry name" value="Ribosomal_uL23/eL15/eS24_sf"/>
</dbReference>
<dbReference type="InterPro" id="IPR001014">
    <property type="entry name" value="Ribosomal_uL23_CS"/>
</dbReference>
<dbReference type="PANTHER" id="PTHR11620">
    <property type="entry name" value="60S RIBOSOMAL PROTEIN L23A"/>
    <property type="match status" value="1"/>
</dbReference>
<dbReference type="Pfam" id="PF00276">
    <property type="entry name" value="Ribosomal_L23"/>
    <property type="match status" value="1"/>
</dbReference>
<dbReference type="SUPFAM" id="SSF54189">
    <property type="entry name" value="Ribosomal proteins S24e, L23 and L15e"/>
    <property type="match status" value="1"/>
</dbReference>
<dbReference type="PROSITE" id="PS00050">
    <property type="entry name" value="RIBOSOMAL_L23"/>
    <property type="match status" value="1"/>
</dbReference>
<comment type="function">
    <text evidence="1">Binds to 23S rRNA.</text>
</comment>
<comment type="subunit">
    <text evidence="1">Part of the 50S ribosomal subunit.</text>
</comment>
<comment type="subcellular location">
    <subcellularLocation>
        <location>Plastid</location>
        <location>Chloroplast</location>
    </subcellularLocation>
</comment>
<comment type="similarity">
    <text evidence="2">Belongs to the universal ribosomal protein uL23 family.</text>
</comment>
<keyword id="KW-0150">Chloroplast</keyword>
<keyword id="KW-0934">Plastid</keyword>
<keyword id="KW-1185">Reference proteome</keyword>
<keyword id="KW-0687">Ribonucleoprotein</keyword>
<keyword id="KW-0689">Ribosomal protein</keyword>
<keyword id="KW-0694">RNA-binding</keyword>
<keyword id="KW-0699">rRNA-binding</keyword>
<organism>
    <name type="scientific">Solanum tuberosum</name>
    <name type="common">Potato</name>
    <dbReference type="NCBI Taxonomy" id="4113"/>
    <lineage>
        <taxon>Eukaryota</taxon>
        <taxon>Viridiplantae</taxon>
        <taxon>Streptophyta</taxon>
        <taxon>Embryophyta</taxon>
        <taxon>Tracheophyta</taxon>
        <taxon>Spermatophyta</taxon>
        <taxon>Magnoliopsida</taxon>
        <taxon>eudicotyledons</taxon>
        <taxon>Gunneridae</taxon>
        <taxon>Pentapetalae</taxon>
        <taxon>asterids</taxon>
        <taxon>lamiids</taxon>
        <taxon>Solanales</taxon>
        <taxon>Solanaceae</taxon>
        <taxon>Solanoideae</taxon>
        <taxon>Solaneae</taxon>
        <taxon>Solanum</taxon>
    </lineage>
</organism>